<keyword id="KW-0063">Aspartyl esterase</keyword>
<keyword id="KW-1015">Disulfide bond</keyword>
<keyword id="KW-0325">Glycoprotein</keyword>
<keyword id="KW-0378">Hydrolase</keyword>
<keyword id="KW-0472">Membrane</keyword>
<keyword id="KW-1185">Reference proteome</keyword>
<keyword id="KW-0812">Transmembrane</keyword>
<keyword id="KW-1133">Transmembrane helix</keyword>
<name>PME64_ARATH</name>
<organism>
    <name type="scientific">Arabidopsis thaliana</name>
    <name type="common">Mouse-ear cress</name>
    <dbReference type="NCBI Taxonomy" id="3702"/>
    <lineage>
        <taxon>Eukaryota</taxon>
        <taxon>Viridiplantae</taxon>
        <taxon>Streptophyta</taxon>
        <taxon>Embryophyta</taxon>
        <taxon>Tracheophyta</taxon>
        <taxon>Spermatophyta</taxon>
        <taxon>Magnoliopsida</taxon>
        <taxon>eudicotyledons</taxon>
        <taxon>Gunneridae</taxon>
        <taxon>Pentapetalae</taxon>
        <taxon>rosids</taxon>
        <taxon>malvids</taxon>
        <taxon>Brassicales</taxon>
        <taxon>Brassicaceae</taxon>
        <taxon>Camelineae</taxon>
        <taxon>Arabidopsis</taxon>
    </lineage>
</organism>
<proteinExistence type="evidence at transcript level"/>
<sequence>MDSPTLPHSISASSSTPFASAAVKPHRNKLLSRNGILIIIAASCILLLLISLLIYATVSKSSRNHHNPSHQTPTSDDHPPPETPPSPPPIAQIRLACNATRFPDHCVASLSKPGQVPPDPKPVQIIHSAISVSYENLKSGQSKIQSILDSSAGNRNRTNIATICLEILSYSQHRTESTDIAVTSGDIKDARAWMSAALAYQFDCWSGLKTVNDTKQVVDTITFFEGLVNLTGNALSMMLSFDSFGDDVVSWIRPATERDGFWEKAGPSLGSGTGTEASLGFPSGLTEDVTVCKNGGKDCKYKTVQEAVDSAPDTNRTVKFVIRIREGVYEETVRVPFEKKNVVFIGDGMGKTVITGSLNVGQPGMTTFESATVGVLGDGFMARDLTIENTAGADAHQAVAFRSDSDFSVLENCEFLGNQDTLYAHSLRQFYKQCRIQGNVDFIFGNSAAVFQDCDILIASKHSKLEQGGANNAITAHGRIDASQSTGFVFLNCSINGTEEYMKEFQANPEGHKNFLGRPWKEFSRTVFVNCNLESLISPDGWMPWNGDFALKTLYYGEYKNTGPGSVRSSRVPWSSEIPEKHVDVYSVANFIQADEWASTTA</sequence>
<feature type="chain" id="PRO_0000371709" description="Probable pectinesterase/pectinesterase inhibitor 64">
    <location>
        <begin position="1"/>
        <end position="602"/>
    </location>
</feature>
<feature type="transmembrane region" description="Helical" evidence="2">
    <location>
        <begin position="36"/>
        <end position="56"/>
    </location>
</feature>
<feature type="region of interest" description="Disordered" evidence="3">
    <location>
        <begin position="62"/>
        <end position="91"/>
    </location>
</feature>
<feature type="region of interest" description="Pectinesterase inhibitor 64">
    <location>
        <begin position="87"/>
        <end position="237"/>
    </location>
</feature>
<feature type="region of interest" description="Pectinesterase 64">
    <location>
        <begin position="288"/>
        <end position="595"/>
    </location>
</feature>
<feature type="compositionally biased region" description="Pro residues" evidence="3">
    <location>
        <begin position="81"/>
        <end position="90"/>
    </location>
</feature>
<feature type="active site" description="Proton donor; for pectinesterase activity" evidence="1">
    <location>
        <position position="420"/>
    </location>
</feature>
<feature type="active site" description="Nucleophile; for pectinesterase activity" evidence="1">
    <location>
        <position position="441"/>
    </location>
</feature>
<feature type="binding site" evidence="1">
    <location>
        <position position="367"/>
    </location>
    <ligand>
        <name>substrate</name>
        <note>for pectinesterase activity</note>
    </ligand>
</feature>
<feature type="binding site" evidence="1">
    <location>
        <position position="397"/>
    </location>
    <ligand>
        <name>substrate</name>
        <note>for pectinesterase activity</note>
    </ligand>
</feature>
<feature type="binding site" evidence="1">
    <location>
        <position position="518"/>
    </location>
    <ligand>
        <name>substrate</name>
        <note>for pectinesterase activity</note>
    </ligand>
</feature>
<feature type="binding site" evidence="1">
    <location>
        <position position="520"/>
    </location>
    <ligand>
        <name>substrate</name>
        <note>for pectinesterase activity</note>
    </ligand>
</feature>
<feature type="site" description="Transition state stabilizer" evidence="1">
    <location>
        <position position="419"/>
    </location>
</feature>
<feature type="glycosylation site" description="N-linked (GlcNAc...) asparagine" evidence="2">
    <location>
        <position position="98"/>
    </location>
</feature>
<feature type="glycosylation site" description="N-linked (GlcNAc...) asparagine" evidence="2">
    <location>
        <position position="156"/>
    </location>
</feature>
<feature type="glycosylation site" description="N-linked (GlcNAc...) asparagine" evidence="2">
    <location>
        <position position="212"/>
    </location>
</feature>
<feature type="glycosylation site" description="N-linked (GlcNAc...) asparagine" evidence="2">
    <location>
        <position position="229"/>
    </location>
</feature>
<feature type="glycosylation site" description="N-linked (GlcNAc...) asparagine" evidence="2">
    <location>
        <position position="315"/>
    </location>
</feature>
<feature type="glycosylation site" description="N-linked (GlcNAc...) asparagine" evidence="2">
    <location>
        <position position="492"/>
    </location>
</feature>
<feature type="glycosylation site" description="N-linked (GlcNAc...) asparagine" evidence="2">
    <location>
        <position position="496"/>
    </location>
</feature>
<feature type="disulfide bond" evidence="1">
    <location>
        <begin position="434"/>
        <end position="454"/>
    </location>
</feature>
<evidence type="ECO:0000250" key="1"/>
<evidence type="ECO:0000255" key="2"/>
<evidence type="ECO:0000256" key="3">
    <source>
        <dbReference type="SAM" id="MobiDB-lite"/>
    </source>
</evidence>
<evidence type="ECO:0000269" key="4">
    <source>
    </source>
</evidence>
<evidence type="ECO:0000305" key="5"/>
<comment type="function">
    <text evidence="1">Acts in the modification of cell walls via demethylesterification of cell wall pectin.</text>
</comment>
<comment type="catalytic activity">
    <reaction>
        <text>[(1-&gt;4)-alpha-D-galacturonosyl methyl ester](n) + n H2O = [(1-&gt;4)-alpha-D-galacturonosyl](n) + n methanol + n H(+)</text>
        <dbReference type="Rhea" id="RHEA:22380"/>
        <dbReference type="Rhea" id="RHEA-COMP:14570"/>
        <dbReference type="Rhea" id="RHEA-COMP:14573"/>
        <dbReference type="ChEBI" id="CHEBI:15377"/>
        <dbReference type="ChEBI" id="CHEBI:15378"/>
        <dbReference type="ChEBI" id="CHEBI:17790"/>
        <dbReference type="ChEBI" id="CHEBI:140522"/>
        <dbReference type="ChEBI" id="CHEBI:140523"/>
        <dbReference type="EC" id="3.1.1.11"/>
    </reaction>
</comment>
<comment type="pathway">
    <text>Glycan metabolism; pectin degradation; 2-dehydro-3-deoxy-D-gluconate from pectin: step 1/5.</text>
</comment>
<comment type="subcellular location">
    <subcellularLocation>
        <location evidence="5">Membrane</location>
        <topology evidence="5">Single-pass membrane protein</topology>
    </subcellularLocation>
</comment>
<comment type="tissue specificity">
    <text evidence="4">Expressed in siliques.</text>
</comment>
<comment type="developmental stage">
    <text evidence="4">Expressed during late developmental phases of siliques.</text>
</comment>
<comment type="miscellaneous">
    <text>The PMEI region may act as an autoinhibitory domain and prevent untimely PME activity during transport.</text>
</comment>
<comment type="similarity">
    <text evidence="5">In the N-terminal section; belongs to the PMEI family.</text>
</comment>
<comment type="similarity">
    <text evidence="5">In the C-terminal section; belongs to the pectinesterase family.</text>
</comment>
<comment type="sequence caution" evidence="5">
    <conflict type="erroneous initiation">
        <sequence resource="EMBL-CDS" id="AAM91523"/>
    </conflict>
</comment>
<gene>
    <name type="primary">PME64</name>
    <name type="synonym">ARATH64</name>
    <name type="ordered locus">At5g64640</name>
    <name type="ORF">MUB3.16</name>
</gene>
<dbReference type="EC" id="3.1.1.11"/>
<dbReference type="EMBL" id="AB010076">
    <property type="protein sequence ID" value="BAB11431.1"/>
    <property type="molecule type" value="Genomic_DNA"/>
</dbReference>
<dbReference type="EMBL" id="CP002688">
    <property type="protein sequence ID" value="AED97931.1"/>
    <property type="molecule type" value="Genomic_DNA"/>
</dbReference>
<dbReference type="EMBL" id="AY128320">
    <property type="protein sequence ID" value="AAM91523.1"/>
    <property type="status" value="ALT_INIT"/>
    <property type="molecule type" value="mRNA"/>
</dbReference>
<dbReference type="RefSeq" id="NP_568991.2">
    <property type="nucleotide sequence ID" value="NM_125860.5"/>
</dbReference>
<dbReference type="SMR" id="Q8L7Q7"/>
<dbReference type="FunCoup" id="Q8L7Q7">
    <property type="interactions" value="101"/>
</dbReference>
<dbReference type="STRING" id="3702.Q8L7Q7"/>
<dbReference type="GlyCosmos" id="Q8L7Q7">
    <property type="glycosylation" value="7 sites, No reported glycans"/>
</dbReference>
<dbReference type="GlyGen" id="Q8L7Q7">
    <property type="glycosylation" value="7 sites"/>
</dbReference>
<dbReference type="PaxDb" id="3702-AT5G64640.1"/>
<dbReference type="ProteomicsDB" id="226149"/>
<dbReference type="EnsemblPlants" id="AT5G64640.1">
    <property type="protein sequence ID" value="AT5G64640.1"/>
    <property type="gene ID" value="AT5G64640"/>
</dbReference>
<dbReference type="GeneID" id="836585"/>
<dbReference type="Gramene" id="AT5G64640.1">
    <property type="protein sequence ID" value="AT5G64640.1"/>
    <property type="gene ID" value="AT5G64640"/>
</dbReference>
<dbReference type="KEGG" id="ath:AT5G64640"/>
<dbReference type="Araport" id="AT5G64640"/>
<dbReference type="TAIR" id="AT5G64640"/>
<dbReference type="eggNOG" id="ENOG502QW0X">
    <property type="taxonomic scope" value="Eukaryota"/>
</dbReference>
<dbReference type="HOGENOM" id="CLU_012243_9_3_1"/>
<dbReference type="InParanoid" id="Q8L7Q7"/>
<dbReference type="OMA" id="FWEKAGP"/>
<dbReference type="PhylomeDB" id="Q8L7Q7"/>
<dbReference type="BioCyc" id="ARA:AT5G64640-MONOMER"/>
<dbReference type="BRENDA" id="3.1.1.11">
    <property type="organism ID" value="399"/>
</dbReference>
<dbReference type="UniPathway" id="UPA00545">
    <property type="reaction ID" value="UER00823"/>
</dbReference>
<dbReference type="PRO" id="PR:Q8L7Q7"/>
<dbReference type="Proteomes" id="UP000006548">
    <property type="component" value="Chromosome 5"/>
</dbReference>
<dbReference type="ExpressionAtlas" id="Q8L7Q7">
    <property type="expression patterns" value="baseline and differential"/>
</dbReference>
<dbReference type="GO" id="GO:0016020">
    <property type="term" value="C:membrane"/>
    <property type="evidence" value="ECO:0007669"/>
    <property type="project" value="UniProtKB-SubCell"/>
</dbReference>
<dbReference type="GO" id="GO:0004857">
    <property type="term" value="F:enzyme inhibitor activity"/>
    <property type="evidence" value="ECO:0007669"/>
    <property type="project" value="InterPro"/>
</dbReference>
<dbReference type="GO" id="GO:0030599">
    <property type="term" value="F:pectinesterase activity"/>
    <property type="evidence" value="ECO:0007669"/>
    <property type="project" value="UniProtKB-EC"/>
</dbReference>
<dbReference type="GO" id="GO:0042545">
    <property type="term" value="P:cell wall modification"/>
    <property type="evidence" value="ECO:0007669"/>
    <property type="project" value="InterPro"/>
</dbReference>
<dbReference type="GO" id="GO:0052542">
    <property type="term" value="P:defense response by callose deposition"/>
    <property type="evidence" value="ECO:0000315"/>
    <property type="project" value="TAIR"/>
</dbReference>
<dbReference type="GO" id="GO:0045490">
    <property type="term" value="P:pectin catabolic process"/>
    <property type="evidence" value="ECO:0007669"/>
    <property type="project" value="UniProtKB-UniPathway"/>
</dbReference>
<dbReference type="CDD" id="cd15798">
    <property type="entry name" value="PMEI-like_3"/>
    <property type="match status" value="1"/>
</dbReference>
<dbReference type="FunFam" id="2.160.20.10:FF:000001">
    <property type="entry name" value="Pectinesterase"/>
    <property type="match status" value="1"/>
</dbReference>
<dbReference type="FunFam" id="1.20.140.40:FF:000021">
    <property type="entry name" value="Probable pectinesterase/pectinesterase inhibitor 51"/>
    <property type="match status" value="1"/>
</dbReference>
<dbReference type="Gene3D" id="1.20.140.40">
    <property type="entry name" value="Invertase/pectin methylesterase inhibitor family protein"/>
    <property type="match status" value="1"/>
</dbReference>
<dbReference type="Gene3D" id="2.160.20.10">
    <property type="entry name" value="Single-stranded right-handed beta-helix, Pectin lyase-like"/>
    <property type="match status" value="1"/>
</dbReference>
<dbReference type="InterPro" id="IPR035513">
    <property type="entry name" value="Invertase/methylesterase_inhib"/>
</dbReference>
<dbReference type="InterPro" id="IPR012334">
    <property type="entry name" value="Pectin_lyas_fold"/>
</dbReference>
<dbReference type="InterPro" id="IPR011050">
    <property type="entry name" value="Pectin_lyase_fold/virulence"/>
</dbReference>
<dbReference type="InterPro" id="IPR000070">
    <property type="entry name" value="Pectinesterase_cat"/>
</dbReference>
<dbReference type="InterPro" id="IPR006501">
    <property type="entry name" value="Pectinesterase_inhib_dom"/>
</dbReference>
<dbReference type="NCBIfam" id="TIGR01614">
    <property type="entry name" value="PME_inhib"/>
    <property type="match status" value="1"/>
</dbReference>
<dbReference type="PANTHER" id="PTHR31707">
    <property type="entry name" value="PECTINESTERASE"/>
    <property type="match status" value="1"/>
</dbReference>
<dbReference type="Pfam" id="PF01095">
    <property type="entry name" value="Pectinesterase"/>
    <property type="match status" value="1"/>
</dbReference>
<dbReference type="Pfam" id="PF04043">
    <property type="entry name" value="PMEI"/>
    <property type="match status" value="1"/>
</dbReference>
<dbReference type="SMART" id="SM00856">
    <property type="entry name" value="PMEI"/>
    <property type="match status" value="1"/>
</dbReference>
<dbReference type="SUPFAM" id="SSF51126">
    <property type="entry name" value="Pectin lyase-like"/>
    <property type="match status" value="1"/>
</dbReference>
<dbReference type="SUPFAM" id="SSF101148">
    <property type="entry name" value="Plant invertase/pectin methylesterase inhibitor"/>
    <property type="match status" value="1"/>
</dbReference>
<protein>
    <recommendedName>
        <fullName>Probable pectinesterase/pectinesterase inhibitor 64</fullName>
    </recommendedName>
    <domain>
        <recommendedName>
            <fullName>Pectinesterase inhibitor 64</fullName>
        </recommendedName>
        <alternativeName>
            <fullName>Pectin methylesterase inhibitor 64</fullName>
        </alternativeName>
    </domain>
    <domain>
        <recommendedName>
            <fullName>Pectinesterase 64</fullName>
            <shortName>PE 64</shortName>
            <ecNumber>3.1.1.11</ecNumber>
        </recommendedName>
        <alternativeName>
            <fullName>Pectin methylesterase 64</fullName>
            <shortName>AtPME64</shortName>
        </alternativeName>
    </domain>
</protein>
<reference key="1">
    <citation type="journal article" date="1998" name="DNA Res.">
        <title>Structural analysis of Arabidopsis thaliana chromosome 5. IV. Sequence features of the regions of 1,456,315 bp covered by nineteen physically assigned P1 and TAC clones.</title>
        <authorList>
            <person name="Sato S."/>
            <person name="Kaneko T."/>
            <person name="Kotani H."/>
            <person name="Nakamura Y."/>
            <person name="Asamizu E."/>
            <person name="Miyajima N."/>
            <person name="Tabata S."/>
        </authorList>
    </citation>
    <scope>NUCLEOTIDE SEQUENCE [LARGE SCALE GENOMIC DNA]</scope>
    <source>
        <strain>cv. Columbia</strain>
    </source>
</reference>
<reference key="2">
    <citation type="journal article" date="2017" name="Plant J.">
        <title>Araport11: a complete reannotation of the Arabidopsis thaliana reference genome.</title>
        <authorList>
            <person name="Cheng C.Y."/>
            <person name="Krishnakumar V."/>
            <person name="Chan A.P."/>
            <person name="Thibaud-Nissen F."/>
            <person name="Schobel S."/>
            <person name="Town C.D."/>
        </authorList>
    </citation>
    <scope>GENOME REANNOTATION</scope>
    <source>
        <strain>cv. Columbia</strain>
    </source>
</reference>
<reference key="3">
    <citation type="journal article" date="2003" name="Science">
        <title>Empirical analysis of transcriptional activity in the Arabidopsis genome.</title>
        <authorList>
            <person name="Yamada K."/>
            <person name="Lim J."/>
            <person name="Dale J.M."/>
            <person name="Chen H."/>
            <person name="Shinn P."/>
            <person name="Palm C.J."/>
            <person name="Southwick A.M."/>
            <person name="Wu H.C."/>
            <person name="Kim C.J."/>
            <person name="Nguyen M."/>
            <person name="Pham P.K."/>
            <person name="Cheuk R.F."/>
            <person name="Karlin-Newmann G."/>
            <person name="Liu S.X."/>
            <person name="Lam B."/>
            <person name="Sakano H."/>
            <person name="Wu T."/>
            <person name="Yu G."/>
            <person name="Miranda M."/>
            <person name="Quach H.L."/>
            <person name="Tripp M."/>
            <person name="Chang C.H."/>
            <person name="Lee J.M."/>
            <person name="Toriumi M.J."/>
            <person name="Chan M.M."/>
            <person name="Tang C.C."/>
            <person name="Onodera C.S."/>
            <person name="Deng J.M."/>
            <person name="Akiyama K."/>
            <person name="Ansari Y."/>
            <person name="Arakawa T."/>
            <person name="Banh J."/>
            <person name="Banno F."/>
            <person name="Bowser L."/>
            <person name="Brooks S.Y."/>
            <person name="Carninci P."/>
            <person name="Chao Q."/>
            <person name="Choy N."/>
            <person name="Enju A."/>
            <person name="Goldsmith A.D."/>
            <person name="Gurjal M."/>
            <person name="Hansen N.F."/>
            <person name="Hayashizaki Y."/>
            <person name="Johnson-Hopson C."/>
            <person name="Hsuan V.W."/>
            <person name="Iida K."/>
            <person name="Karnes M."/>
            <person name="Khan S."/>
            <person name="Koesema E."/>
            <person name="Ishida J."/>
            <person name="Jiang P.X."/>
            <person name="Jones T."/>
            <person name="Kawai J."/>
            <person name="Kamiya A."/>
            <person name="Meyers C."/>
            <person name="Nakajima M."/>
            <person name="Narusaka M."/>
            <person name="Seki M."/>
            <person name="Sakurai T."/>
            <person name="Satou M."/>
            <person name="Tamse R."/>
            <person name="Vaysberg M."/>
            <person name="Wallender E.K."/>
            <person name="Wong C."/>
            <person name="Yamamura Y."/>
            <person name="Yuan S."/>
            <person name="Shinozaki K."/>
            <person name="Davis R.W."/>
            <person name="Theologis A."/>
            <person name="Ecker J.R."/>
        </authorList>
    </citation>
    <scope>NUCLEOTIDE SEQUENCE [LARGE SCALE MRNA] OF 167-602</scope>
    <source>
        <strain>cv. Columbia</strain>
    </source>
</reference>
<reference key="4">
    <citation type="journal article" date="2004" name="Carbohydr. Res.">
        <title>Pectin methylesterases: sequence-structural features and phylogenetic relationships.</title>
        <authorList>
            <person name="Markovic O."/>
            <person name="Janecek S."/>
        </authorList>
    </citation>
    <scope>GENE FAMILY</scope>
    <scope>NOMENCLATURE</scope>
</reference>
<reference key="5">
    <citation type="journal article" date="2006" name="Planta">
        <title>Comprehensive expression profiling of the pectin methylesterase gene family during silique development in Arabidopsis thaliana.</title>
        <authorList>
            <person name="Louvet R."/>
            <person name="Cavel E."/>
            <person name="Gutierrez L."/>
            <person name="Guenin S."/>
            <person name="Roger D."/>
            <person name="Gillet F."/>
            <person name="Guerineau F."/>
            <person name="Pelloux J."/>
        </authorList>
    </citation>
    <scope>TISSUE SPECIFICITY</scope>
    <scope>DEVELOPMENTAL STAGE</scope>
</reference>
<accession>Q8L7Q7</accession>
<accession>Q9FLF6</accession>